<sequence>MLSCRLQCALALLSIALAVGTVSAAPSDPRLRQFLQKSLAAAAGKQELAKYFLAELLSEPSQTENEALESEDLSRGAEQDEVRLELERSANSNPALAPRERKAGCKNFFWKTFTSC</sequence>
<protein>
    <recommendedName>
        <fullName>Somatostatin</fullName>
    </recommendedName>
    <component>
        <recommendedName>
            <fullName>Somatostatin-28</fullName>
        </recommendedName>
    </component>
    <component>
        <recommendedName>
            <fullName>Somatostatin-14</fullName>
        </recommendedName>
    </component>
</protein>
<evidence type="ECO:0000250" key="1"/>
<evidence type="ECO:0000256" key="2">
    <source>
        <dbReference type="SAM" id="MobiDB-lite"/>
    </source>
</evidence>
<evidence type="ECO:0000305" key="3"/>
<name>SMS_CHICK</name>
<comment type="function">
    <text>Somatostatin inhibits the release of somatotropin.</text>
</comment>
<comment type="subcellular location">
    <subcellularLocation>
        <location>Secreted</location>
    </subcellularLocation>
</comment>
<comment type="similarity">
    <text evidence="3">Belongs to the somatostatin family.</text>
</comment>
<keyword id="KW-0165">Cleavage on pair of basic residues</keyword>
<keyword id="KW-1015">Disulfide bond</keyword>
<keyword id="KW-0372">Hormone</keyword>
<keyword id="KW-1185">Reference proteome</keyword>
<keyword id="KW-0964">Secreted</keyword>
<keyword id="KW-0732">Signal</keyword>
<gene>
    <name type="primary">SST</name>
</gene>
<accession>P33094</accession>
<proteinExistence type="inferred from homology"/>
<feature type="signal peptide" evidence="1">
    <location>
        <begin position="1"/>
        <end position="24"/>
    </location>
</feature>
<feature type="propeptide" id="PRO_0000033106" evidence="1">
    <location>
        <begin position="25"/>
        <end position="88"/>
    </location>
</feature>
<feature type="peptide" id="PRO_0000033107" description="Somatostatin-28">
    <location>
        <begin position="89"/>
        <end position="116"/>
    </location>
</feature>
<feature type="peptide" id="PRO_0000033108" description="Somatostatin-14">
    <location>
        <begin position="103"/>
        <end position="116"/>
    </location>
</feature>
<feature type="region of interest" description="Disordered" evidence="2">
    <location>
        <begin position="60"/>
        <end position="82"/>
    </location>
</feature>
<feature type="compositionally biased region" description="Basic and acidic residues" evidence="2">
    <location>
        <begin position="72"/>
        <end position="82"/>
    </location>
</feature>
<feature type="disulfide bond" evidence="1">
    <location>
        <begin position="105"/>
        <end position="116"/>
    </location>
</feature>
<reference key="1">
    <citation type="submission" date="1991-06" db="EMBL/GenBank/DDBJ databases">
        <title>Nucleotide sequence determination of chicken somatostatin precursor cDNA.</title>
        <authorList>
            <person name="Nata K."/>
            <person name="Kobayashi T."/>
            <person name="Karahashi K."/>
            <person name="Kato S."/>
            <person name="Yamamoto H."/>
            <person name="Yonekura H."/>
            <person name="Okamoto H."/>
        </authorList>
    </citation>
    <scope>NUCLEOTIDE SEQUENCE [MRNA]</scope>
    <source>
        <tissue>Pancreas</tissue>
    </source>
</reference>
<organism>
    <name type="scientific">Gallus gallus</name>
    <name type="common">Chicken</name>
    <dbReference type="NCBI Taxonomy" id="9031"/>
    <lineage>
        <taxon>Eukaryota</taxon>
        <taxon>Metazoa</taxon>
        <taxon>Chordata</taxon>
        <taxon>Craniata</taxon>
        <taxon>Vertebrata</taxon>
        <taxon>Euteleostomi</taxon>
        <taxon>Archelosauria</taxon>
        <taxon>Archosauria</taxon>
        <taxon>Dinosauria</taxon>
        <taxon>Saurischia</taxon>
        <taxon>Theropoda</taxon>
        <taxon>Coelurosauria</taxon>
        <taxon>Aves</taxon>
        <taxon>Neognathae</taxon>
        <taxon>Galloanserae</taxon>
        <taxon>Galliformes</taxon>
        <taxon>Phasianidae</taxon>
        <taxon>Phasianinae</taxon>
        <taxon>Gallus</taxon>
    </lineage>
</organism>
<dbReference type="EMBL" id="X60191">
    <property type="protein sequence ID" value="CAA42747.1"/>
    <property type="molecule type" value="mRNA"/>
</dbReference>
<dbReference type="PIR" id="S20630">
    <property type="entry name" value="S20630"/>
</dbReference>
<dbReference type="RefSeq" id="NP_990667.1">
    <property type="nucleotide sequence ID" value="NM_205336.1"/>
</dbReference>
<dbReference type="FunCoup" id="P33094">
    <property type="interactions" value="1"/>
</dbReference>
<dbReference type="STRING" id="9031.ENSGALP00000011889"/>
<dbReference type="PaxDb" id="9031-ENSGALP00000011889"/>
<dbReference type="GeneID" id="396279"/>
<dbReference type="KEGG" id="gga:396279"/>
<dbReference type="CTD" id="112256"/>
<dbReference type="VEuPathDB" id="HostDB:geneid_396279"/>
<dbReference type="eggNOG" id="ENOG502S11K">
    <property type="taxonomic scope" value="Eukaryota"/>
</dbReference>
<dbReference type="HOGENOM" id="CLU_124515_1_1_1"/>
<dbReference type="InParanoid" id="P33094"/>
<dbReference type="OMA" id="AEQDDMR"/>
<dbReference type="OrthoDB" id="9948948at2759"/>
<dbReference type="PhylomeDB" id="P33094"/>
<dbReference type="Reactome" id="R-GGA-375276">
    <property type="pathway name" value="Peptide ligand-binding receptors"/>
</dbReference>
<dbReference type="Reactome" id="R-GGA-418594">
    <property type="pathway name" value="G alpha (i) signalling events"/>
</dbReference>
<dbReference type="PRO" id="PR:P33094"/>
<dbReference type="Proteomes" id="UP000000539">
    <property type="component" value="Chromosome 9"/>
</dbReference>
<dbReference type="Bgee" id="ENSGALG00000007361">
    <property type="expression patterns" value="Expressed in brain and 2 other cell types or tissues"/>
</dbReference>
<dbReference type="GO" id="GO:0005615">
    <property type="term" value="C:extracellular space"/>
    <property type="evidence" value="ECO:0000318"/>
    <property type="project" value="GO_Central"/>
</dbReference>
<dbReference type="GO" id="GO:0005179">
    <property type="term" value="F:hormone activity"/>
    <property type="evidence" value="ECO:0007669"/>
    <property type="project" value="UniProtKB-KW"/>
</dbReference>
<dbReference type="GO" id="GO:0030334">
    <property type="term" value="P:regulation of cell migration"/>
    <property type="evidence" value="ECO:0000318"/>
    <property type="project" value="GO_Central"/>
</dbReference>
<dbReference type="InterPro" id="IPR004250">
    <property type="entry name" value="Somatostatin"/>
</dbReference>
<dbReference type="InterPro" id="IPR018142">
    <property type="entry name" value="Somatostatin/Cortistatin_C"/>
</dbReference>
<dbReference type="PANTHER" id="PTHR10558">
    <property type="entry name" value="SOMATOSTATIN"/>
    <property type="match status" value="1"/>
</dbReference>
<dbReference type="PANTHER" id="PTHR10558:SF2">
    <property type="entry name" value="SOMATOSTATIN"/>
    <property type="match status" value="1"/>
</dbReference>
<dbReference type="Pfam" id="PF03002">
    <property type="entry name" value="Somatostatin"/>
    <property type="match status" value="1"/>
</dbReference>
<dbReference type="PIRSF" id="PIRSF001814">
    <property type="entry name" value="Somatostatin"/>
    <property type="match status" value="1"/>
</dbReference>